<dbReference type="EC" id="6.3.1.1" evidence="1"/>
<dbReference type="EMBL" id="CP001176">
    <property type="protein sequence ID" value="ACK58999.1"/>
    <property type="molecule type" value="Genomic_DNA"/>
</dbReference>
<dbReference type="RefSeq" id="WP_000284917.1">
    <property type="nucleotide sequence ID" value="NZ_VEHB01000001.1"/>
</dbReference>
<dbReference type="SMR" id="B7HIG1"/>
<dbReference type="KEGG" id="bcb:BCB4264_A1819"/>
<dbReference type="HOGENOM" id="CLU_071543_0_0_9"/>
<dbReference type="UniPathway" id="UPA00134">
    <property type="reaction ID" value="UER00194"/>
</dbReference>
<dbReference type="Proteomes" id="UP000007096">
    <property type="component" value="Chromosome"/>
</dbReference>
<dbReference type="GO" id="GO:0005829">
    <property type="term" value="C:cytosol"/>
    <property type="evidence" value="ECO:0007669"/>
    <property type="project" value="TreeGrafter"/>
</dbReference>
<dbReference type="GO" id="GO:0004071">
    <property type="term" value="F:aspartate-ammonia ligase activity"/>
    <property type="evidence" value="ECO:0007669"/>
    <property type="project" value="UniProtKB-UniRule"/>
</dbReference>
<dbReference type="GO" id="GO:0005524">
    <property type="term" value="F:ATP binding"/>
    <property type="evidence" value="ECO:0007669"/>
    <property type="project" value="UniProtKB-UniRule"/>
</dbReference>
<dbReference type="GO" id="GO:0140096">
    <property type="term" value="F:catalytic activity, acting on a protein"/>
    <property type="evidence" value="ECO:0007669"/>
    <property type="project" value="UniProtKB-ARBA"/>
</dbReference>
<dbReference type="GO" id="GO:0016740">
    <property type="term" value="F:transferase activity"/>
    <property type="evidence" value="ECO:0007669"/>
    <property type="project" value="UniProtKB-ARBA"/>
</dbReference>
<dbReference type="GO" id="GO:0070981">
    <property type="term" value="P:L-asparagine biosynthetic process"/>
    <property type="evidence" value="ECO:0007669"/>
    <property type="project" value="UniProtKB-UniRule"/>
</dbReference>
<dbReference type="CDD" id="cd00645">
    <property type="entry name" value="AsnA"/>
    <property type="match status" value="1"/>
</dbReference>
<dbReference type="Gene3D" id="3.30.930.10">
    <property type="entry name" value="Bira Bifunctional Protein, Domain 2"/>
    <property type="match status" value="1"/>
</dbReference>
<dbReference type="HAMAP" id="MF_00555">
    <property type="entry name" value="AsnA"/>
    <property type="match status" value="1"/>
</dbReference>
<dbReference type="InterPro" id="IPR006195">
    <property type="entry name" value="aa-tRNA-synth_II"/>
</dbReference>
<dbReference type="InterPro" id="IPR045864">
    <property type="entry name" value="aa-tRNA-synth_II/BPL/LPL"/>
</dbReference>
<dbReference type="InterPro" id="IPR004618">
    <property type="entry name" value="AsnA"/>
</dbReference>
<dbReference type="NCBIfam" id="TIGR00669">
    <property type="entry name" value="asnA"/>
    <property type="match status" value="1"/>
</dbReference>
<dbReference type="PANTHER" id="PTHR30073">
    <property type="entry name" value="ASPARTATE--AMMONIA LIGASE"/>
    <property type="match status" value="1"/>
</dbReference>
<dbReference type="PANTHER" id="PTHR30073:SF5">
    <property type="entry name" value="ASPARTATE--AMMONIA LIGASE"/>
    <property type="match status" value="1"/>
</dbReference>
<dbReference type="Pfam" id="PF03590">
    <property type="entry name" value="AsnA"/>
    <property type="match status" value="1"/>
</dbReference>
<dbReference type="PIRSF" id="PIRSF001555">
    <property type="entry name" value="Asp_ammon_ligase"/>
    <property type="match status" value="1"/>
</dbReference>
<dbReference type="SUPFAM" id="SSF55681">
    <property type="entry name" value="Class II aaRS and biotin synthetases"/>
    <property type="match status" value="1"/>
</dbReference>
<dbReference type="PROSITE" id="PS50862">
    <property type="entry name" value="AA_TRNA_LIGASE_II"/>
    <property type="match status" value="1"/>
</dbReference>
<sequence length="327" mass="38116">MYQSLMTVRETQIAIKEVKTFFEDQLAKRLELFRVSAPLFVTKKSGLNDHLNGVERPIEFDMLHSGEELEIVHSLAKWKRFALHEYGYEAGEGLYTNMNAIRRDEELDATHSIYVDQWDWEKIVQKEWRTVEYLQKTVQTIYGIFKDLEDHLFEKYPFLGKYLPEEIVFVTSQELEDKYPELTPKDREHAIAKEHGAVFIIGIGDALRSGEKHDGRAADYDDWKLNGDILFWHPVLQSSFELSSMGIRVDSKSLDEQLTKTGEDFKREYDFHKGILEDVLPLTIGGGIGQSRMCMYFLRKAHIGEVQSSVWPDDLREACKKENIHLF</sequence>
<reference key="1">
    <citation type="submission" date="2008-10" db="EMBL/GenBank/DDBJ databases">
        <title>Genome sequence of Bacillus cereus B4264.</title>
        <authorList>
            <person name="Dodson R.J."/>
            <person name="Durkin A.S."/>
            <person name="Rosovitz M.J."/>
            <person name="Rasko D.A."/>
            <person name="Hoffmaster A."/>
            <person name="Ravel J."/>
            <person name="Sutton G."/>
        </authorList>
    </citation>
    <scope>NUCLEOTIDE SEQUENCE [LARGE SCALE GENOMIC DNA]</scope>
    <source>
        <strain>B4264</strain>
    </source>
</reference>
<accession>B7HIG1</accession>
<organism>
    <name type="scientific">Bacillus cereus (strain B4264)</name>
    <dbReference type="NCBI Taxonomy" id="405532"/>
    <lineage>
        <taxon>Bacteria</taxon>
        <taxon>Bacillati</taxon>
        <taxon>Bacillota</taxon>
        <taxon>Bacilli</taxon>
        <taxon>Bacillales</taxon>
        <taxon>Bacillaceae</taxon>
        <taxon>Bacillus</taxon>
        <taxon>Bacillus cereus group</taxon>
    </lineage>
</organism>
<gene>
    <name evidence="1" type="primary">asnA</name>
    <name type="ordered locus">BCB4264_A1819</name>
</gene>
<proteinExistence type="inferred from homology"/>
<evidence type="ECO:0000255" key="1">
    <source>
        <dbReference type="HAMAP-Rule" id="MF_00555"/>
    </source>
</evidence>
<name>ASNA_BACC4</name>
<protein>
    <recommendedName>
        <fullName evidence="1">Aspartate--ammonia ligase</fullName>
        <ecNumber evidence="1">6.3.1.1</ecNumber>
    </recommendedName>
    <alternativeName>
        <fullName evidence="1">Asparagine synthetase A</fullName>
    </alternativeName>
</protein>
<feature type="chain" id="PRO_1000129108" description="Aspartate--ammonia ligase">
    <location>
        <begin position="1"/>
        <end position="327"/>
    </location>
</feature>
<comment type="catalytic activity">
    <reaction evidence="1">
        <text>L-aspartate + NH4(+) + ATP = L-asparagine + AMP + diphosphate + H(+)</text>
        <dbReference type="Rhea" id="RHEA:11372"/>
        <dbReference type="ChEBI" id="CHEBI:15378"/>
        <dbReference type="ChEBI" id="CHEBI:28938"/>
        <dbReference type="ChEBI" id="CHEBI:29991"/>
        <dbReference type="ChEBI" id="CHEBI:30616"/>
        <dbReference type="ChEBI" id="CHEBI:33019"/>
        <dbReference type="ChEBI" id="CHEBI:58048"/>
        <dbReference type="ChEBI" id="CHEBI:456215"/>
        <dbReference type="EC" id="6.3.1.1"/>
    </reaction>
</comment>
<comment type="pathway">
    <text evidence="1">Amino-acid biosynthesis; L-asparagine biosynthesis; L-asparagine from L-aspartate (ammonia route): step 1/1.</text>
</comment>
<comment type="subcellular location">
    <subcellularLocation>
        <location evidence="1">Cytoplasm</location>
    </subcellularLocation>
</comment>
<comment type="similarity">
    <text evidence="1">Belongs to the class-II aminoacyl-tRNA synthetase family. AsnA subfamily.</text>
</comment>
<keyword id="KW-0028">Amino-acid biosynthesis</keyword>
<keyword id="KW-0061">Asparagine biosynthesis</keyword>
<keyword id="KW-0067">ATP-binding</keyword>
<keyword id="KW-0963">Cytoplasm</keyword>
<keyword id="KW-0436">Ligase</keyword>
<keyword id="KW-0547">Nucleotide-binding</keyword>